<reference key="1">
    <citation type="journal article" date="2006" name="J. Bacteriol.">
        <title>Comparative genomic evidence for a close relationship between the dimorphic prosthecate bacteria Hyphomonas neptunium and Caulobacter crescentus.</title>
        <authorList>
            <person name="Badger J.H."/>
            <person name="Hoover T.R."/>
            <person name="Brun Y.V."/>
            <person name="Weiner R.M."/>
            <person name="Laub M.T."/>
            <person name="Alexandre G."/>
            <person name="Mrazek J."/>
            <person name="Ren Q."/>
            <person name="Paulsen I.T."/>
            <person name="Nelson K.E."/>
            <person name="Khouri H.M."/>
            <person name="Radune D."/>
            <person name="Sosa J."/>
            <person name="Dodson R.J."/>
            <person name="Sullivan S.A."/>
            <person name="Rosovitz M.J."/>
            <person name="Madupu R."/>
            <person name="Brinkac L.M."/>
            <person name="Durkin A.S."/>
            <person name="Daugherty S.C."/>
            <person name="Kothari S.P."/>
            <person name="Giglio M.G."/>
            <person name="Zhou L."/>
            <person name="Haft D.H."/>
            <person name="Selengut J.D."/>
            <person name="Davidsen T.M."/>
            <person name="Yang Q."/>
            <person name="Zafar N."/>
            <person name="Ward N.L."/>
        </authorList>
    </citation>
    <scope>NUCLEOTIDE SEQUENCE [LARGE SCALE GENOMIC DNA]</scope>
    <source>
        <strain>ATCC 15444</strain>
    </source>
</reference>
<feature type="chain" id="PRO_0000340197" description="Sulfate adenylyltransferase subunit 2">
    <location>
        <begin position="1"/>
        <end position="328"/>
    </location>
</feature>
<feature type="region of interest" description="Disordered" evidence="2">
    <location>
        <begin position="309"/>
        <end position="328"/>
    </location>
</feature>
<protein>
    <recommendedName>
        <fullName evidence="1">Sulfate adenylyltransferase subunit 2</fullName>
        <ecNumber evidence="1">2.7.7.4</ecNumber>
    </recommendedName>
    <alternativeName>
        <fullName evidence="1">ATP-sulfurylase small subunit</fullName>
    </alternativeName>
    <alternativeName>
        <fullName evidence="1">Sulfate adenylate transferase</fullName>
        <shortName evidence="1">SAT</shortName>
    </alternativeName>
</protein>
<proteinExistence type="inferred from homology"/>
<sequence length="328" mass="37535">MRTRHGAFLLLARPATERAHTPEQDQYTLPTLTHLDRLEAESLHILREVAAECEKPVMLYSIGKDSAVMLHLAMKAFYPARPPFPLLHVDTGWKFREMIAFRDRKVKELGLELLVHMNEDGVREGVGPFTHGSAYHTDVMKTAALKQALDKYGFDAAFGGARRDEEKSRAKERVISFRSAGHRWDPKRQRPEIWNLYNTRMHKGESLRAFPLSNWTELDIWQYIRREGIELVPLYLAAPRPVVTWNDTLIMVDDDRVPAEIAAKAEVKSVRFRTLGCYPLTGAVESTATTLDDVIQEILLTTTSERQGRAIDKDQTASMEKKKQEGYF</sequence>
<evidence type="ECO:0000255" key="1">
    <source>
        <dbReference type="HAMAP-Rule" id="MF_00064"/>
    </source>
</evidence>
<evidence type="ECO:0000256" key="2">
    <source>
        <dbReference type="SAM" id="MobiDB-lite"/>
    </source>
</evidence>
<comment type="function">
    <text evidence="1">With CysN forms the ATP sulfurylase (ATPS) that catalyzes the adenylation of sulfate producing adenosine 5'-phosphosulfate (APS) and diphosphate, the first enzymatic step in sulfur assimilation pathway. APS synthesis involves the formation of a high-energy phosphoric-sulfuric acid anhydride bond driven by GTP hydrolysis by CysN coupled to ATP hydrolysis by CysD.</text>
</comment>
<comment type="catalytic activity">
    <reaction evidence="1">
        <text>sulfate + ATP + H(+) = adenosine 5'-phosphosulfate + diphosphate</text>
        <dbReference type="Rhea" id="RHEA:18133"/>
        <dbReference type="ChEBI" id="CHEBI:15378"/>
        <dbReference type="ChEBI" id="CHEBI:16189"/>
        <dbReference type="ChEBI" id="CHEBI:30616"/>
        <dbReference type="ChEBI" id="CHEBI:33019"/>
        <dbReference type="ChEBI" id="CHEBI:58243"/>
        <dbReference type="EC" id="2.7.7.4"/>
    </reaction>
</comment>
<comment type="pathway">
    <text evidence="1">Sulfur metabolism; hydrogen sulfide biosynthesis; sulfite from sulfate: step 1/3.</text>
</comment>
<comment type="subunit">
    <text evidence="1">Heterodimer composed of CysD, the smaller subunit, and CysN.</text>
</comment>
<comment type="similarity">
    <text evidence="1">Belongs to the PAPS reductase family. CysD subfamily.</text>
</comment>
<accession>Q0C438</accession>
<organism>
    <name type="scientific">Hyphomonas neptunium (strain ATCC 15444)</name>
    <dbReference type="NCBI Taxonomy" id="228405"/>
    <lineage>
        <taxon>Bacteria</taxon>
        <taxon>Pseudomonadati</taxon>
        <taxon>Pseudomonadota</taxon>
        <taxon>Alphaproteobacteria</taxon>
        <taxon>Hyphomonadales</taxon>
        <taxon>Hyphomonadaceae</taxon>
        <taxon>Hyphomonas</taxon>
    </lineage>
</organism>
<keyword id="KW-0067">ATP-binding</keyword>
<keyword id="KW-0547">Nucleotide-binding</keyword>
<keyword id="KW-0548">Nucleotidyltransferase</keyword>
<keyword id="KW-1185">Reference proteome</keyword>
<keyword id="KW-0808">Transferase</keyword>
<name>CYSD_HYPNA</name>
<dbReference type="EC" id="2.7.7.4" evidence="1"/>
<dbReference type="EMBL" id="CP000158">
    <property type="protein sequence ID" value="ABI77512.1"/>
    <property type="molecule type" value="Genomic_DNA"/>
</dbReference>
<dbReference type="SMR" id="Q0C438"/>
<dbReference type="STRING" id="228405.HNE_0777"/>
<dbReference type="KEGG" id="hne:HNE_0777"/>
<dbReference type="eggNOG" id="COG0175">
    <property type="taxonomic scope" value="Bacteria"/>
</dbReference>
<dbReference type="HOGENOM" id="CLU_043026_0_0_5"/>
<dbReference type="UniPathway" id="UPA00140">
    <property type="reaction ID" value="UER00204"/>
</dbReference>
<dbReference type="Proteomes" id="UP000001959">
    <property type="component" value="Chromosome"/>
</dbReference>
<dbReference type="GO" id="GO:0005524">
    <property type="term" value="F:ATP binding"/>
    <property type="evidence" value="ECO:0007669"/>
    <property type="project" value="UniProtKB-KW"/>
</dbReference>
<dbReference type="GO" id="GO:0004781">
    <property type="term" value="F:sulfate adenylyltransferase (ATP) activity"/>
    <property type="evidence" value="ECO:0007669"/>
    <property type="project" value="UniProtKB-UniRule"/>
</dbReference>
<dbReference type="GO" id="GO:0070814">
    <property type="term" value="P:hydrogen sulfide biosynthetic process"/>
    <property type="evidence" value="ECO:0007669"/>
    <property type="project" value="UniProtKB-UniRule"/>
</dbReference>
<dbReference type="GO" id="GO:0000103">
    <property type="term" value="P:sulfate assimilation"/>
    <property type="evidence" value="ECO:0007669"/>
    <property type="project" value="UniProtKB-UniRule"/>
</dbReference>
<dbReference type="CDD" id="cd23946">
    <property type="entry name" value="Sulfate_adenylyltransferase_2"/>
    <property type="match status" value="1"/>
</dbReference>
<dbReference type="FunFam" id="3.40.50.620:FF:000002">
    <property type="entry name" value="Sulfate adenylyltransferase subunit 2"/>
    <property type="match status" value="1"/>
</dbReference>
<dbReference type="Gene3D" id="3.40.50.620">
    <property type="entry name" value="HUPs"/>
    <property type="match status" value="1"/>
</dbReference>
<dbReference type="HAMAP" id="MF_00064">
    <property type="entry name" value="Sulf_adenylyltr_sub2"/>
    <property type="match status" value="1"/>
</dbReference>
<dbReference type="InterPro" id="IPR002500">
    <property type="entry name" value="PAPS_reduct_dom"/>
</dbReference>
<dbReference type="InterPro" id="IPR014729">
    <property type="entry name" value="Rossmann-like_a/b/a_fold"/>
</dbReference>
<dbReference type="InterPro" id="IPR011784">
    <property type="entry name" value="SO4_adenylTrfase_ssu"/>
</dbReference>
<dbReference type="InterPro" id="IPR050128">
    <property type="entry name" value="Sulfate_adenylyltrnsfr_sub2"/>
</dbReference>
<dbReference type="NCBIfam" id="TIGR02039">
    <property type="entry name" value="CysD"/>
    <property type="match status" value="1"/>
</dbReference>
<dbReference type="NCBIfam" id="NF003587">
    <property type="entry name" value="PRK05253.1"/>
    <property type="match status" value="1"/>
</dbReference>
<dbReference type="NCBIfam" id="NF009214">
    <property type="entry name" value="PRK12563.1"/>
    <property type="match status" value="1"/>
</dbReference>
<dbReference type="PANTHER" id="PTHR43196">
    <property type="entry name" value="SULFATE ADENYLYLTRANSFERASE SUBUNIT 2"/>
    <property type="match status" value="1"/>
</dbReference>
<dbReference type="PANTHER" id="PTHR43196:SF1">
    <property type="entry name" value="SULFATE ADENYLYLTRANSFERASE SUBUNIT 2"/>
    <property type="match status" value="1"/>
</dbReference>
<dbReference type="Pfam" id="PF01507">
    <property type="entry name" value="PAPS_reduct"/>
    <property type="match status" value="1"/>
</dbReference>
<dbReference type="PIRSF" id="PIRSF002936">
    <property type="entry name" value="CysDAde_trans"/>
    <property type="match status" value="1"/>
</dbReference>
<dbReference type="SUPFAM" id="SSF52402">
    <property type="entry name" value="Adenine nucleotide alpha hydrolases-like"/>
    <property type="match status" value="1"/>
</dbReference>
<gene>
    <name evidence="1" type="primary">cysD</name>
    <name type="ordered locus">HNE_0777</name>
</gene>